<keyword id="KW-0067">ATP-binding</keyword>
<keyword id="KW-0235">DNA replication</keyword>
<keyword id="KW-0547">Nucleotide-binding</keyword>
<sequence length="329" mass="37462">MAELFWFEKYRPRSFDEVVDLEEVKSRLREFVKSGNMPHLLFYGPPGTGKTTMALVLARELYGEYWRENTLELNASDERGINVIRERVKEFARTAPVGKAPFKLVILDEADNMTSDAQQALRRIMEIYAQNTRFILLANYVSRIIDPIISRCAVFRFSPMPRHLMAERLKYIAKSEGVEVKEDAIDLIYELSEGDMRKAINILQVAAATNKIVDRNVVAAAAAAIRPTDIVELFNLALSGDYLKAREKMRELMYVKGVAGVDFIRAFQRELIRMSLDDETKAEVAELLADVDYRLTQGADEEIQLSYFLAKLGSIGKKIRAASLPPKKR</sequence>
<name>RFCS1_PYRIL</name>
<protein>
    <recommendedName>
        <fullName evidence="1">Replication factor C small subunit 1</fullName>
        <shortName evidence="1">RFC small subunit 1</shortName>
    </recommendedName>
    <alternativeName>
        <fullName evidence="1">Clamp loader small subunit 1</fullName>
    </alternativeName>
</protein>
<feature type="chain" id="PRO_0000292189" description="Replication factor C small subunit 1">
    <location>
        <begin position="1"/>
        <end position="329"/>
    </location>
</feature>
<feature type="binding site" evidence="1">
    <location>
        <begin position="44"/>
        <end position="51"/>
    </location>
    <ligand>
        <name>ATP</name>
        <dbReference type="ChEBI" id="CHEBI:30616"/>
    </ligand>
</feature>
<gene>
    <name evidence="1" type="primary">rfcS1</name>
    <name type="ordered locus">Pisl_0656</name>
</gene>
<dbReference type="EMBL" id="CP000504">
    <property type="protein sequence ID" value="ABL87834.1"/>
    <property type="molecule type" value="Genomic_DNA"/>
</dbReference>
<dbReference type="RefSeq" id="WP_011762410.1">
    <property type="nucleotide sequence ID" value="NC_008701.1"/>
</dbReference>
<dbReference type="SMR" id="A1RSA2"/>
<dbReference type="STRING" id="384616.Pisl_0656"/>
<dbReference type="GeneID" id="4618319"/>
<dbReference type="KEGG" id="pis:Pisl_0656"/>
<dbReference type="eggNOG" id="arCOG00469">
    <property type="taxonomic scope" value="Archaea"/>
</dbReference>
<dbReference type="HOGENOM" id="CLU_042324_2_1_2"/>
<dbReference type="OrthoDB" id="7928at2157"/>
<dbReference type="Proteomes" id="UP000002595">
    <property type="component" value="Chromosome"/>
</dbReference>
<dbReference type="GO" id="GO:0005663">
    <property type="term" value="C:DNA replication factor C complex"/>
    <property type="evidence" value="ECO:0007669"/>
    <property type="project" value="InterPro"/>
</dbReference>
<dbReference type="GO" id="GO:0005524">
    <property type="term" value="F:ATP binding"/>
    <property type="evidence" value="ECO:0007669"/>
    <property type="project" value="UniProtKB-UniRule"/>
</dbReference>
<dbReference type="GO" id="GO:0016887">
    <property type="term" value="F:ATP hydrolysis activity"/>
    <property type="evidence" value="ECO:0007669"/>
    <property type="project" value="InterPro"/>
</dbReference>
<dbReference type="GO" id="GO:0003677">
    <property type="term" value="F:DNA binding"/>
    <property type="evidence" value="ECO:0007669"/>
    <property type="project" value="InterPro"/>
</dbReference>
<dbReference type="GO" id="GO:0003689">
    <property type="term" value="F:DNA clamp loader activity"/>
    <property type="evidence" value="ECO:0007669"/>
    <property type="project" value="UniProtKB-UniRule"/>
</dbReference>
<dbReference type="GO" id="GO:0006281">
    <property type="term" value="P:DNA repair"/>
    <property type="evidence" value="ECO:0007669"/>
    <property type="project" value="TreeGrafter"/>
</dbReference>
<dbReference type="GO" id="GO:0006261">
    <property type="term" value="P:DNA-templated DNA replication"/>
    <property type="evidence" value="ECO:0007669"/>
    <property type="project" value="TreeGrafter"/>
</dbReference>
<dbReference type="CDD" id="cd00009">
    <property type="entry name" value="AAA"/>
    <property type="match status" value="1"/>
</dbReference>
<dbReference type="CDD" id="cd18140">
    <property type="entry name" value="HLD_clamp_RFC"/>
    <property type="match status" value="1"/>
</dbReference>
<dbReference type="FunFam" id="1.20.272.10:FF:000029">
    <property type="entry name" value="Replication factor C small subunit"/>
    <property type="match status" value="1"/>
</dbReference>
<dbReference type="FunFam" id="3.40.50.300:FF:000129">
    <property type="entry name" value="Replication factor C subunit 5"/>
    <property type="match status" value="1"/>
</dbReference>
<dbReference type="Gene3D" id="1.10.8.60">
    <property type="match status" value="1"/>
</dbReference>
<dbReference type="Gene3D" id="1.20.272.10">
    <property type="match status" value="1"/>
</dbReference>
<dbReference type="Gene3D" id="3.40.50.300">
    <property type="entry name" value="P-loop containing nucleotide triphosphate hydrolases"/>
    <property type="match status" value="1"/>
</dbReference>
<dbReference type="HAMAP" id="MF_01509">
    <property type="entry name" value="RfcS"/>
    <property type="match status" value="1"/>
</dbReference>
<dbReference type="InterPro" id="IPR003593">
    <property type="entry name" value="AAA+_ATPase"/>
</dbReference>
<dbReference type="InterPro" id="IPR003959">
    <property type="entry name" value="ATPase_AAA_core"/>
</dbReference>
<dbReference type="InterPro" id="IPR008921">
    <property type="entry name" value="DNA_pol3_clamp-load_cplx_C"/>
</dbReference>
<dbReference type="InterPro" id="IPR050238">
    <property type="entry name" value="DNA_Rep/Repair_Clamp_Loader"/>
</dbReference>
<dbReference type="InterPro" id="IPR027417">
    <property type="entry name" value="P-loop_NTPase"/>
</dbReference>
<dbReference type="InterPro" id="IPR023748">
    <property type="entry name" value="Rep_factor-C_ssu_arc"/>
</dbReference>
<dbReference type="InterPro" id="IPR013748">
    <property type="entry name" value="Rep_factorC_C"/>
</dbReference>
<dbReference type="InterPro" id="IPR047854">
    <property type="entry name" value="RFC_lid"/>
</dbReference>
<dbReference type="NCBIfam" id="NF001679">
    <property type="entry name" value="PRK00440.1"/>
    <property type="match status" value="1"/>
</dbReference>
<dbReference type="PANTHER" id="PTHR11669">
    <property type="entry name" value="REPLICATION FACTOR C / DNA POLYMERASE III GAMMA-TAU SUBUNIT"/>
    <property type="match status" value="1"/>
</dbReference>
<dbReference type="PANTHER" id="PTHR11669:SF20">
    <property type="entry name" value="REPLICATION FACTOR C SUBUNIT 4"/>
    <property type="match status" value="1"/>
</dbReference>
<dbReference type="Pfam" id="PF00004">
    <property type="entry name" value="AAA"/>
    <property type="match status" value="1"/>
</dbReference>
<dbReference type="Pfam" id="PF21960">
    <property type="entry name" value="RCF1-5-like_lid"/>
    <property type="match status" value="1"/>
</dbReference>
<dbReference type="Pfam" id="PF08542">
    <property type="entry name" value="Rep_fac_C"/>
    <property type="match status" value="1"/>
</dbReference>
<dbReference type="SMART" id="SM00382">
    <property type="entry name" value="AAA"/>
    <property type="match status" value="1"/>
</dbReference>
<dbReference type="SUPFAM" id="SSF52540">
    <property type="entry name" value="P-loop containing nucleoside triphosphate hydrolases"/>
    <property type="match status" value="1"/>
</dbReference>
<dbReference type="SUPFAM" id="SSF48019">
    <property type="entry name" value="post-AAA+ oligomerization domain-like"/>
    <property type="match status" value="1"/>
</dbReference>
<proteinExistence type="inferred from homology"/>
<organism>
    <name type="scientific">Pyrobaculum islandicum (strain DSM 4184 / JCM 9189 / GEO3)</name>
    <dbReference type="NCBI Taxonomy" id="384616"/>
    <lineage>
        <taxon>Archaea</taxon>
        <taxon>Thermoproteota</taxon>
        <taxon>Thermoprotei</taxon>
        <taxon>Thermoproteales</taxon>
        <taxon>Thermoproteaceae</taxon>
        <taxon>Pyrobaculum</taxon>
    </lineage>
</organism>
<accession>A1RSA2</accession>
<evidence type="ECO:0000255" key="1">
    <source>
        <dbReference type="HAMAP-Rule" id="MF_01509"/>
    </source>
</evidence>
<comment type="function">
    <text evidence="1">Part of the RFC clamp loader complex which loads the PCNA sliding clamp onto DNA.</text>
</comment>
<comment type="subunit">
    <text evidence="1">Heteromultimer composed of small subunits (RfcS) and large subunits (RfcL).</text>
</comment>
<comment type="similarity">
    <text evidence="1">Belongs to the activator 1 small subunits family. RfcS subfamily.</text>
</comment>
<reference key="1">
    <citation type="submission" date="2006-12" db="EMBL/GenBank/DDBJ databases">
        <title>Complete sequence of Pyrobaculum islandicum DSM 4184.</title>
        <authorList>
            <person name="Copeland A."/>
            <person name="Lucas S."/>
            <person name="Lapidus A."/>
            <person name="Barry K."/>
            <person name="Detter J.C."/>
            <person name="Glavina del Rio T."/>
            <person name="Dalin E."/>
            <person name="Tice H."/>
            <person name="Pitluck S."/>
            <person name="Meincke L."/>
            <person name="Brettin T."/>
            <person name="Bruce D."/>
            <person name="Han C."/>
            <person name="Tapia R."/>
            <person name="Gilna P."/>
            <person name="Schmutz J."/>
            <person name="Larimer F."/>
            <person name="Land M."/>
            <person name="Hauser L."/>
            <person name="Kyrpides N."/>
            <person name="Mikhailova N."/>
            <person name="Cozen A.E."/>
            <person name="Fitz-Gibbon S.T."/>
            <person name="House C.H."/>
            <person name="Saltikov C."/>
            <person name="Lowe T."/>
            <person name="Richardson P."/>
        </authorList>
    </citation>
    <scope>NUCLEOTIDE SEQUENCE [LARGE SCALE GENOMIC DNA]</scope>
    <source>
        <strain>DSM 4184 / JCM 9189 / GEO3</strain>
    </source>
</reference>